<comment type="function">
    <text evidence="1">Forms part of the ribosomal stalk which helps the ribosome interact with GTP-bound translation factors.</text>
</comment>
<comment type="subunit">
    <text evidence="1">Part of the ribosomal stalk of the 50S ribosomal subunit. Interacts with L10 and the large rRNA to form the base of the stalk. L10 forms an elongated spine to which L12 dimers bind in a sequential fashion forming a multimeric L10(L12)X complex.</text>
</comment>
<comment type="PTM">
    <text evidence="1">One or more lysine residues are methylated.</text>
</comment>
<comment type="similarity">
    <text evidence="1">Belongs to the universal ribosomal protein uL11 family.</text>
</comment>
<evidence type="ECO:0000255" key="1">
    <source>
        <dbReference type="HAMAP-Rule" id="MF_00736"/>
    </source>
</evidence>
<evidence type="ECO:0000305" key="2"/>
<keyword id="KW-0488">Methylation</keyword>
<keyword id="KW-0687">Ribonucleoprotein</keyword>
<keyword id="KW-0689">Ribosomal protein</keyword>
<keyword id="KW-0694">RNA-binding</keyword>
<keyword id="KW-0699">rRNA-binding</keyword>
<dbReference type="EMBL" id="AP009493">
    <property type="protein sequence ID" value="BAG19703.1"/>
    <property type="molecule type" value="Genomic_DNA"/>
</dbReference>
<dbReference type="RefSeq" id="WP_003967000.1">
    <property type="nucleotide sequence ID" value="NC_010572.1"/>
</dbReference>
<dbReference type="SMR" id="B1W447"/>
<dbReference type="KEGG" id="sgr:SGR_2874"/>
<dbReference type="eggNOG" id="COG0080">
    <property type="taxonomic scope" value="Bacteria"/>
</dbReference>
<dbReference type="HOGENOM" id="CLU_074237_2_1_11"/>
<dbReference type="Proteomes" id="UP000001685">
    <property type="component" value="Chromosome"/>
</dbReference>
<dbReference type="GO" id="GO:0022625">
    <property type="term" value="C:cytosolic large ribosomal subunit"/>
    <property type="evidence" value="ECO:0007669"/>
    <property type="project" value="TreeGrafter"/>
</dbReference>
<dbReference type="GO" id="GO:0070180">
    <property type="term" value="F:large ribosomal subunit rRNA binding"/>
    <property type="evidence" value="ECO:0007669"/>
    <property type="project" value="UniProtKB-UniRule"/>
</dbReference>
<dbReference type="GO" id="GO:0003735">
    <property type="term" value="F:structural constituent of ribosome"/>
    <property type="evidence" value="ECO:0007669"/>
    <property type="project" value="InterPro"/>
</dbReference>
<dbReference type="GO" id="GO:0006412">
    <property type="term" value="P:translation"/>
    <property type="evidence" value="ECO:0007669"/>
    <property type="project" value="UniProtKB-UniRule"/>
</dbReference>
<dbReference type="CDD" id="cd00349">
    <property type="entry name" value="Ribosomal_L11"/>
    <property type="match status" value="1"/>
</dbReference>
<dbReference type="FunFam" id="1.10.10.250:FF:000001">
    <property type="entry name" value="50S ribosomal protein L11"/>
    <property type="match status" value="1"/>
</dbReference>
<dbReference type="FunFam" id="3.30.1550.10:FF:000001">
    <property type="entry name" value="50S ribosomal protein L11"/>
    <property type="match status" value="1"/>
</dbReference>
<dbReference type="Gene3D" id="1.10.10.250">
    <property type="entry name" value="Ribosomal protein L11, C-terminal domain"/>
    <property type="match status" value="1"/>
</dbReference>
<dbReference type="Gene3D" id="3.30.1550.10">
    <property type="entry name" value="Ribosomal protein L11/L12, N-terminal domain"/>
    <property type="match status" value="1"/>
</dbReference>
<dbReference type="HAMAP" id="MF_00736">
    <property type="entry name" value="Ribosomal_uL11"/>
    <property type="match status" value="1"/>
</dbReference>
<dbReference type="InterPro" id="IPR000911">
    <property type="entry name" value="Ribosomal_uL11"/>
</dbReference>
<dbReference type="InterPro" id="IPR006519">
    <property type="entry name" value="Ribosomal_uL11_bac-typ"/>
</dbReference>
<dbReference type="InterPro" id="IPR020783">
    <property type="entry name" value="Ribosomal_uL11_C"/>
</dbReference>
<dbReference type="InterPro" id="IPR036769">
    <property type="entry name" value="Ribosomal_uL11_C_sf"/>
</dbReference>
<dbReference type="InterPro" id="IPR020785">
    <property type="entry name" value="Ribosomal_uL11_CS"/>
</dbReference>
<dbReference type="InterPro" id="IPR020784">
    <property type="entry name" value="Ribosomal_uL11_N"/>
</dbReference>
<dbReference type="InterPro" id="IPR036796">
    <property type="entry name" value="Ribosomal_uL11_N_sf"/>
</dbReference>
<dbReference type="NCBIfam" id="TIGR01632">
    <property type="entry name" value="L11_bact"/>
    <property type="match status" value="1"/>
</dbReference>
<dbReference type="PANTHER" id="PTHR11661">
    <property type="entry name" value="60S RIBOSOMAL PROTEIN L12"/>
    <property type="match status" value="1"/>
</dbReference>
<dbReference type="PANTHER" id="PTHR11661:SF1">
    <property type="entry name" value="LARGE RIBOSOMAL SUBUNIT PROTEIN UL11M"/>
    <property type="match status" value="1"/>
</dbReference>
<dbReference type="Pfam" id="PF00298">
    <property type="entry name" value="Ribosomal_L11"/>
    <property type="match status" value="1"/>
</dbReference>
<dbReference type="Pfam" id="PF03946">
    <property type="entry name" value="Ribosomal_L11_N"/>
    <property type="match status" value="1"/>
</dbReference>
<dbReference type="SMART" id="SM00649">
    <property type="entry name" value="RL11"/>
    <property type="match status" value="1"/>
</dbReference>
<dbReference type="SUPFAM" id="SSF54747">
    <property type="entry name" value="Ribosomal L11/L12e N-terminal domain"/>
    <property type="match status" value="1"/>
</dbReference>
<dbReference type="SUPFAM" id="SSF46906">
    <property type="entry name" value="Ribosomal protein L11, C-terminal domain"/>
    <property type="match status" value="1"/>
</dbReference>
<dbReference type="PROSITE" id="PS00359">
    <property type="entry name" value="RIBOSOMAL_L11"/>
    <property type="match status" value="1"/>
</dbReference>
<name>RL11_STRGG</name>
<organism>
    <name type="scientific">Streptomyces griseus subsp. griseus (strain JCM 4626 / CBS 651.72 / NBRC 13350 / KCC S-0626 / ISP 5235)</name>
    <dbReference type="NCBI Taxonomy" id="455632"/>
    <lineage>
        <taxon>Bacteria</taxon>
        <taxon>Bacillati</taxon>
        <taxon>Actinomycetota</taxon>
        <taxon>Actinomycetes</taxon>
        <taxon>Kitasatosporales</taxon>
        <taxon>Streptomycetaceae</taxon>
        <taxon>Streptomyces</taxon>
    </lineage>
</organism>
<sequence length="144" mass="15033">MPPKKKKVTGLIKLQINAGAANPAPPVGPALGQHGVNIMEFCKAYNAATESQRGMVVPVEITVYEDRSFTFVTKTPPAAKLILKAAGVDKGSGEPHKTKVAKLTAAQVREIATTKLPDLNANDLDAASKIIAGTARSMGITVEG</sequence>
<reference key="1">
    <citation type="journal article" date="2008" name="J. Bacteriol.">
        <title>Genome sequence of the streptomycin-producing microorganism Streptomyces griseus IFO 13350.</title>
        <authorList>
            <person name="Ohnishi Y."/>
            <person name="Ishikawa J."/>
            <person name="Hara H."/>
            <person name="Suzuki H."/>
            <person name="Ikenoya M."/>
            <person name="Ikeda H."/>
            <person name="Yamashita A."/>
            <person name="Hattori M."/>
            <person name="Horinouchi S."/>
        </authorList>
    </citation>
    <scope>NUCLEOTIDE SEQUENCE [LARGE SCALE GENOMIC DNA]</scope>
    <source>
        <strain>JCM 4626 / CBS 651.72 / NBRC 13350 / KCC S-0626 / ISP 5235</strain>
    </source>
</reference>
<proteinExistence type="inferred from homology"/>
<feature type="chain" id="PRO_1000195732" description="Large ribosomal subunit protein uL11">
    <location>
        <begin position="1"/>
        <end position="144"/>
    </location>
</feature>
<gene>
    <name evidence="1" type="primary">rplK</name>
    <name type="ordered locus">SGR_2874</name>
</gene>
<protein>
    <recommendedName>
        <fullName evidence="1">Large ribosomal subunit protein uL11</fullName>
    </recommendedName>
    <alternativeName>
        <fullName evidence="2">50S ribosomal protein L11</fullName>
    </alternativeName>
</protein>
<accession>B1W447</accession>